<accession>P21909</accession>
<accession>Q5NQL2</accession>
<protein>
    <recommendedName>
        <fullName evidence="1">Phosphogluconate dehydratase</fullName>
        <ecNumber evidence="1 2">4.2.1.12</ecNumber>
    </recommendedName>
    <alternativeName>
        <fullName evidence="3">6-phosphogluconate dehydratase</fullName>
    </alternativeName>
</protein>
<keyword id="KW-0004">4Fe-4S</keyword>
<keyword id="KW-0119">Carbohydrate metabolism</keyword>
<keyword id="KW-0311">Gluconate utilization</keyword>
<keyword id="KW-0408">Iron</keyword>
<keyword id="KW-0411">Iron-sulfur</keyword>
<keyword id="KW-0456">Lyase</keyword>
<keyword id="KW-0479">Metal-binding</keyword>
<keyword id="KW-1185">Reference proteome</keyword>
<evidence type="ECO:0000255" key="1">
    <source>
        <dbReference type="HAMAP-Rule" id="MF_02094"/>
    </source>
</evidence>
<evidence type="ECO:0000269" key="2">
    <source>
    </source>
</evidence>
<evidence type="ECO:0000303" key="3">
    <source>
    </source>
</evidence>
<evidence type="ECO:0000305" key="4"/>
<evidence type="ECO:0000305" key="5">
    <source>
    </source>
</evidence>
<sequence length="607" mass="65392">MTDLHSTVEKVTARVIERSRETRKAYLDLIQYEREKGVDRPNLSCSNLAHGFAAMNGDKPALRDFNRMNIGVVTSYNDMLSAHEPYYRYPEQMKVFAREVGATVQVAGGVPAMCDGVTQGQPGMEESLFSRDVIALATSVSLSHGMFEGAALLGICDKIVPGLLMGALRFGHLPTILVPSGPMTTGIPNKEKIRIRQLYAQGKIGQKELLDMEAACYHAEGTCTFYGTANTNQMVMEVLGLHMPGSAFVTPGTPLRQALTRAAVHRVAELGWKGDDYRPLGKIIDEKSIVNAIVGLLATGGSTNHTMHIPAIARAAGVIVNWNDFHDLSEVVPLIARIYPNGPRDINEFQNAGGMAYVIKELLSANLLNRDVTTIAKGGIEEYAKAPALNDAGELVWKPAGEPGDDTILRPVSNPFAKDGGLRLLEGNLGRAMYKASAVDPKFWTIEAPVRVFSDQDDVQKAFKAGELNKDVIVVVRFQGPRANGMPELHKLTPALGVLQDNGYKVALVTDGRMSGATGKVPVALHVSPEALGGGAIGKLRDGDIVRISVEEGKLEALVPADEWNARPHAEKPAFRPGTGRELFDIFRQNAAKAEDGAVAIYAGAGI</sequence>
<comment type="function">
    <text evidence="1 2">Catalyzes the dehydration of 6-phospho-D-gluconate to 2-dehydro-3-deoxy-6-phospho-D-gluconate.</text>
</comment>
<comment type="catalytic activity">
    <reaction evidence="1 2">
        <text>6-phospho-D-gluconate = 2-dehydro-3-deoxy-6-phospho-D-gluconate + H2O</text>
        <dbReference type="Rhea" id="RHEA:17277"/>
        <dbReference type="ChEBI" id="CHEBI:15377"/>
        <dbReference type="ChEBI" id="CHEBI:57569"/>
        <dbReference type="ChEBI" id="CHEBI:58759"/>
        <dbReference type="EC" id="4.2.1.12"/>
    </reaction>
</comment>
<comment type="cofactor">
    <cofactor evidence="1">
        <name>[4Fe-4S] cluster</name>
        <dbReference type="ChEBI" id="CHEBI:49883"/>
    </cofactor>
    <text evidence="1">Binds 1 [4Fe-4S] cluster.</text>
</comment>
<comment type="pathway">
    <text evidence="1 5">Carbohydrate metabolism; Entner-Doudoroff pathway.</text>
</comment>
<comment type="similarity">
    <text evidence="1 4">Belongs to the IlvD/Edd family.</text>
</comment>
<feature type="chain" id="PRO_0000103559" description="Phosphogluconate dehydratase">
    <location>
        <begin position="1"/>
        <end position="607"/>
    </location>
</feature>
<feature type="binding site" evidence="1">
    <location>
        <position position="156"/>
    </location>
    <ligand>
        <name>[4Fe-4S] cluster</name>
        <dbReference type="ChEBI" id="CHEBI:49883"/>
    </ligand>
</feature>
<feature type="binding site" evidence="1">
    <location>
        <position position="223"/>
    </location>
    <ligand>
        <name>[4Fe-4S] cluster</name>
        <dbReference type="ChEBI" id="CHEBI:49883"/>
    </ligand>
</feature>
<feature type="sequence conflict" description="In Ref. 1 and 2." evidence="4" ref="1 2">
    <original>GRELFDIFRQNAAKAEDGAVAIYAGAGI</original>
    <variation>ARIV</variation>
    <location>
        <begin position="580"/>
        <end position="607"/>
    </location>
</feature>
<organism>
    <name type="scientific">Zymomonas mobilis subsp. mobilis (strain ATCC 31821 / ZM4 / CP4)</name>
    <dbReference type="NCBI Taxonomy" id="264203"/>
    <lineage>
        <taxon>Bacteria</taxon>
        <taxon>Pseudomonadati</taxon>
        <taxon>Pseudomonadota</taxon>
        <taxon>Alphaproteobacteria</taxon>
        <taxon>Sphingomonadales</taxon>
        <taxon>Zymomonadaceae</taxon>
        <taxon>Zymomonas</taxon>
    </lineage>
</organism>
<reference key="1">
    <citation type="journal article" date="1990" name="J. Bacteriol.">
        <title>Sequence and genetic organization of a Zymomonas mobilis gene cluster that encodes several enzymes of glucose metabolism.</title>
        <authorList>
            <person name="Barnell W.O."/>
            <person name="Yi K.C."/>
            <person name="Conway T."/>
        </authorList>
    </citation>
    <scope>NUCLEOTIDE SEQUENCE [GENOMIC DNA]</scope>
    <scope>FUNCTION</scope>
    <scope>CATALYTIC ACTIVITY</scope>
    <scope>PATHWAY</scope>
    <source>
        <strain>ATCC 31821 / ZM4 / CP4</strain>
    </source>
</reference>
<reference key="2">
    <citation type="submission" date="2000-10" db="EMBL/GenBank/DDBJ databases">
        <authorList>
            <person name="Ahn J.Y."/>
            <person name="Kang H.S."/>
        </authorList>
    </citation>
    <scope>NUCLEOTIDE SEQUENCE [GENOMIC DNA]</scope>
    <source>
        <strain>ATCC 31821 / ZM4 / CP4</strain>
    </source>
</reference>
<reference key="3">
    <citation type="journal article" date="2005" name="Nat. Biotechnol.">
        <title>The genome sequence of the ethanologenic bacterium Zymomonas mobilis ZM4.</title>
        <authorList>
            <person name="Seo J.-S."/>
            <person name="Chong H."/>
            <person name="Park H.S."/>
            <person name="Yoon K.-O."/>
            <person name="Jung C."/>
            <person name="Kim J.J."/>
            <person name="Hong J.H."/>
            <person name="Kim H."/>
            <person name="Kim J.-H."/>
            <person name="Kil J.-I."/>
            <person name="Park C.J."/>
            <person name="Oh H.-M."/>
            <person name="Lee J.-S."/>
            <person name="Jin S.-J."/>
            <person name="Um H.-W."/>
            <person name="Lee H.-J."/>
            <person name="Oh S.-J."/>
            <person name="Kim J.Y."/>
            <person name="Kang H.L."/>
            <person name="Lee S.Y."/>
            <person name="Lee K.J."/>
            <person name="Kang H.S."/>
        </authorList>
    </citation>
    <scope>NUCLEOTIDE SEQUENCE [LARGE SCALE GENOMIC DNA]</scope>
    <source>
        <strain>ATCC 31821 / ZM4 / CP4</strain>
    </source>
</reference>
<proteinExistence type="evidence at protein level"/>
<gene>
    <name evidence="1 3" type="primary">edd</name>
    <name type="ordered locus">ZMO0368</name>
</gene>
<dbReference type="EC" id="4.2.1.12" evidence="1 2"/>
<dbReference type="EMBL" id="M60615">
    <property type="protein sequence ID" value="AAA27693.1"/>
    <property type="molecule type" value="Genomic_DNA"/>
</dbReference>
<dbReference type="EMBL" id="AF313764">
    <property type="protein sequence ID" value="AAG29866.1"/>
    <property type="molecule type" value="Genomic_DNA"/>
</dbReference>
<dbReference type="EMBL" id="AE008692">
    <property type="protein sequence ID" value="AAV88992.1"/>
    <property type="molecule type" value="Genomic_DNA"/>
</dbReference>
<dbReference type="PIR" id="C37855">
    <property type="entry name" value="C37855"/>
</dbReference>
<dbReference type="RefSeq" id="WP_011240289.1">
    <property type="nucleotide sequence ID" value="NZ_CP035711.1"/>
</dbReference>
<dbReference type="SMR" id="P21909"/>
<dbReference type="STRING" id="264203.ZMO0368"/>
<dbReference type="GeneID" id="79904428"/>
<dbReference type="KEGG" id="zmo:ZMO0368"/>
<dbReference type="eggNOG" id="COG0129">
    <property type="taxonomic scope" value="Bacteria"/>
</dbReference>
<dbReference type="HOGENOM" id="CLU_014271_1_2_5"/>
<dbReference type="UniPathway" id="UPA00226"/>
<dbReference type="Proteomes" id="UP000001173">
    <property type="component" value="Chromosome"/>
</dbReference>
<dbReference type="GO" id="GO:0005829">
    <property type="term" value="C:cytosol"/>
    <property type="evidence" value="ECO:0007669"/>
    <property type="project" value="TreeGrafter"/>
</dbReference>
<dbReference type="GO" id="GO:0051539">
    <property type="term" value="F:4 iron, 4 sulfur cluster binding"/>
    <property type="evidence" value="ECO:0007669"/>
    <property type="project" value="UniProtKB-UniRule"/>
</dbReference>
<dbReference type="GO" id="GO:0046872">
    <property type="term" value="F:metal ion binding"/>
    <property type="evidence" value="ECO:0007669"/>
    <property type="project" value="UniProtKB-KW"/>
</dbReference>
<dbReference type="GO" id="GO:0004456">
    <property type="term" value="F:phosphogluconate dehydratase activity"/>
    <property type="evidence" value="ECO:0007669"/>
    <property type="project" value="UniProtKB-UniRule"/>
</dbReference>
<dbReference type="GO" id="GO:0019521">
    <property type="term" value="P:D-gluconate metabolic process"/>
    <property type="evidence" value="ECO:0007669"/>
    <property type="project" value="UniProtKB-KW"/>
</dbReference>
<dbReference type="GO" id="GO:0009255">
    <property type="term" value="P:Entner-Doudoroff pathway through 6-phosphogluconate"/>
    <property type="evidence" value="ECO:0007669"/>
    <property type="project" value="UniProtKB-UniRule"/>
</dbReference>
<dbReference type="FunFam" id="3.50.30.80:FF:000001">
    <property type="entry name" value="Dihydroxy-acid dehydratase"/>
    <property type="match status" value="1"/>
</dbReference>
<dbReference type="Gene3D" id="3.50.30.80">
    <property type="entry name" value="IlvD/EDD C-terminal domain-like"/>
    <property type="match status" value="1"/>
</dbReference>
<dbReference type="HAMAP" id="MF_02094">
    <property type="entry name" value="Edd"/>
    <property type="match status" value="1"/>
</dbReference>
<dbReference type="InterPro" id="IPR004786">
    <property type="entry name" value="6-phosphgluc_deHydtase"/>
</dbReference>
<dbReference type="InterPro" id="IPR042096">
    <property type="entry name" value="Dihydro-acid_dehy_C"/>
</dbReference>
<dbReference type="InterPro" id="IPR020558">
    <property type="entry name" value="DiOHA_6PGluconate_deHydtase_CS"/>
</dbReference>
<dbReference type="InterPro" id="IPR056740">
    <property type="entry name" value="ILV_EDD_C"/>
</dbReference>
<dbReference type="InterPro" id="IPR000581">
    <property type="entry name" value="ILV_EDD_N"/>
</dbReference>
<dbReference type="InterPro" id="IPR037237">
    <property type="entry name" value="IlvD/EDD_N"/>
</dbReference>
<dbReference type="NCBIfam" id="TIGR01196">
    <property type="entry name" value="edd"/>
    <property type="match status" value="1"/>
</dbReference>
<dbReference type="PANTHER" id="PTHR43661">
    <property type="entry name" value="D-XYLONATE DEHYDRATASE"/>
    <property type="match status" value="1"/>
</dbReference>
<dbReference type="PANTHER" id="PTHR43661:SF1">
    <property type="entry name" value="PHOSPHOGLUCONATE DEHYDRATASE"/>
    <property type="match status" value="1"/>
</dbReference>
<dbReference type="Pfam" id="PF24877">
    <property type="entry name" value="ILV_EDD_C"/>
    <property type="match status" value="1"/>
</dbReference>
<dbReference type="Pfam" id="PF00920">
    <property type="entry name" value="ILVD_EDD_N"/>
    <property type="match status" value="1"/>
</dbReference>
<dbReference type="SUPFAM" id="SSF143975">
    <property type="entry name" value="IlvD/EDD N-terminal domain-like"/>
    <property type="match status" value="1"/>
</dbReference>
<dbReference type="SUPFAM" id="SSF52016">
    <property type="entry name" value="LeuD/IlvD-like"/>
    <property type="match status" value="1"/>
</dbReference>
<dbReference type="PROSITE" id="PS00886">
    <property type="entry name" value="ILVD_EDD_1"/>
    <property type="match status" value="1"/>
</dbReference>
<dbReference type="PROSITE" id="PS00887">
    <property type="entry name" value="ILVD_EDD_2"/>
    <property type="match status" value="1"/>
</dbReference>
<name>EDD_ZYMMO</name>